<keyword id="KW-0687">Ribonucleoprotein</keyword>
<keyword id="KW-0689">Ribosomal protein</keyword>
<keyword id="KW-0694">RNA-binding</keyword>
<keyword id="KW-0699">rRNA-binding</keyword>
<name>RS18_STRSY</name>
<evidence type="ECO:0000255" key="1">
    <source>
        <dbReference type="HAMAP-Rule" id="MF_00270"/>
    </source>
</evidence>
<evidence type="ECO:0000305" key="2"/>
<accession>A4VXF9</accession>
<gene>
    <name evidence="1" type="primary">rpsR</name>
    <name type="ordered locus">SSU05_1832</name>
</gene>
<protein>
    <recommendedName>
        <fullName evidence="1">Small ribosomal subunit protein bS18</fullName>
    </recommendedName>
    <alternativeName>
        <fullName evidence="2">30S ribosomal protein S18</fullName>
    </alternativeName>
</protein>
<organism>
    <name type="scientific">Streptococcus suis (strain 05ZYH33)</name>
    <dbReference type="NCBI Taxonomy" id="391295"/>
    <lineage>
        <taxon>Bacteria</taxon>
        <taxon>Bacillati</taxon>
        <taxon>Bacillota</taxon>
        <taxon>Bacilli</taxon>
        <taxon>Lactobacillales</taxon>
        <taxon>Streptococcaceae</taxon>
        <taxon>Streptococcus</taxon>
    </lineage>
</organism>
<dbReference type="EMBL" id="CP000407">
    <property type="protein sequence ID" value="ABP90798.1"/>
    <property type="molecule type" value="Genomic_DNA"/>
</dbReference>
<dbReference type="SMR" id="A4VXF9"/>
<dbReference type="STRING" id="391295.SSU05_1832"/>
<dbReference type="KEGG" id="ssu:SSU05_1832"/>
<dbReference type="eggNOG" id="COG0238">
    <property type="taxonomic scope" value="Bacteria"/>
</dbReference>
<dbReference type="HOGENOM" id="CLU_148710_2_2_9"/>
<dbReference type="GO" id="GO:0022627">
    <property type="term" value="C:cytosolic small ribosomal subunit"/>
    <property type="evidence" value="ECO:0007669"/>
    <property type="project" value="TreeGrafter"/>
</dbReference>
<dbReference type="GO" id="GO:0070181">
    <property type="term" value="F:small ribosomal subunit rRNA binding"/>
    <property type="evidence" value="ECO:0007669"/>
    <property type="project" value="TreeGrafter"/>
</dbReference>
<dbReference type="GO" id="GO:0003735">
    <property type="term" value="F:structural constituent of ribosome"/>
    <property type="evidence" value="ECO:0007669"/>
    <property type="project" value="InterPro"/>
</dbReference>
<dbReference type="GO" id="GO:0006412">
    <property type="term" value="P:translation"/>
    <property type="evidence" value="ECO:0007669"/>
    <property type="project" value="UniProtKB-UniRule"/>
</dbReference>
<dbReference type="FunFam" id="4.10.640.10:FF:000003">
    <property type="entry name" value="30S ribosomal protein S18"/>
    <property type="match status" value="1"/>
</dbReference>
<dbReference type="Gene3D" id="4.10.640.10">
    <property type="entry name" value="Ribosomal protein S18"/>
    <property type="match status" value="1"/>
</dbReference>
<dbReference type="HAMAP" id="MF_00270">
    <property type="entry name" value="Ribosomal_bS18"/>
    <property type="match status" value="1"/>
</dbReference>
<dbReference type="InterPro" id="IPR001648">
    <property type="entry name" value="Ribosomal_bS18"/>
</dbReference>
<dbReference type="InterPro" id="IPR018275">
    <property type="entry name" value="Ribosomal_bS18_CS"/>
</dbReference>
<dbReference type="InterPro" id="IPR036870">
    <property type="entry name" value="Ribosomal_bS18_sf"/>
</dbReference>
<dbReference type="NCBIfam" id="TIGR00165">
    <property type="entry name" value="S18"/>
    <property type="match status" value="1"/>
</dbReference>
<dbReference type="PANTHER" id="PTHR13479">
    <property type="entry name" value="30S RIBOSOMAL PROTEIN S18"/>
    <property type="match status" value="1"/>
</dbReference>
<dbReference type="PANTHER" id="PTHR13479:SF40">
    <property type="entry name" value="SMALL RIBOSOMAL SUBUNIT PROTEIN BS18M"/>
    <property type="match status" value="1"/>
</dbReference>
<dbReference type="Pfam" id="PF01084">
    <property type="entry name" value="Ribosomal_S18"/>
    <property type="match status" value="1"/>
</dbReference>
<dbReference type="PRINTS" id="PR00974">
    <property type="entry name" value="RIBOSOMALS18"/>
</dbReference>
<dbReference type="SUPFAM" id="SSF46911">
    <property type="entry name" value="Ribosomal protein S18"/>
    <property type="match status" value="1"/>
</dbReference>
<dbReference type="PROSITE" id="PS00057">
    <property type="entry name" value="RIBOSOMAL_S18"/>
    <property type="match status" value="1"/>
</dbReference>
<comment type="function">
    <text evidence="1">Binds as a heterodimer with protein bS6 to the central domain of the 16S rRNA, where it helps stabilize the platform of the 30S subunit.</text>
</comment>
<comment type="subunit">
    <text evidence="1">Part of the 30S ribosomal subunit. Forms a tight heterodimer with protein bS6.</text>
</comment>
<comment type="similarity">
    <text evidence="1">Belongs to the bacterial ribosomal protein bS18 family.</text>
</comment>
<reference key="1">
    <citation type="journal article" date="2007" name="PLoS ONE">
        <title>A glimpse of streptococcal toxic shock syndrome from comparative genomics of S. suis 2 Chinese isolates.</title>
        <authorList>
            <person name="Chen C."/>
            <person name="Tang J."/>
            <person name="Dong W."/>
            <person name="Wang C."/>
            <person name="Feng Y."/>
            <person name="Wang J."/>
            <person name="Zheng F."/>
            <person name="Pan X."/>
            <person name="Liu D."/>
            <person name="Li M."/>
            <person name="Song Y."/>
            <person name="Zhu X."/>
            <person name="Sun H."/>
            <person name="Feng T."/>
            <person name="Guo Z."/>
            <person name="Ju A."/>
            <person name="Ge J."/>
            <person name="Dong Y."/>
            <person name="Sun W."/>
            <person name="Jiang Y."/>
            <person name="Wang J."/>
            <person name="Yan J."/>
            <person name="Yang H."/>
            <person name="Wang X."/>
            <person name="Gao G.F."/>
            <person name="Yang R."/>
            <person name="Wang J."/>
            <person name="Yu J."/>
        </authorList>
    </citation>
    <scope>NUCLEOTIDE SEQUENCE [LARGE SCALE GENOMIC DNA]</scope>
    <source>
        <strain>05ZYH33</strain>
    </source>
</reference>
<proteinExistence type="inferred from homology"/>
<feature type="chain" id="PRO_1000003634" description="Small ribosomal subunit protein bS18">
    <location>
        <begin position="1"/>
        <end position="79"/>
    </location>
</feature>
<sequence length="79" mass="9200">MAQQRRGGFKRRKKVDYIAANKIEYVDYKDTELLSRFISERGKILPRRVTGTSAKNQRKVTTAIKRARVMALLPFVNED</sequence>